<proteinExistence type="inferred from homology"/>
<keyword id="KW-0175">Coiled coil</keyword>
<keyword id="KW-0539">Nucleus</keyword>
<keyword id="KW-1185">Reference proteome</keyword>
<keyword id="KW-0694">RNA-binding</keyword>
<accession>P0DMR1</accession>
<gene>
    <name evidence="6" type="primary">HNRNPCL4</name>
</gene>
<comment type="subcellular location">
    <subcellularLocation>
        <location evidence="1">Nucleus</location>
    </subcellularLocation>
</comment>
<comment type="similarity">
    <text evidence="5">Belongs to the RRM HNRPC family. RALY subfamily.</text>
</comment>
<evidence type="ECO:0000250" key="1">
    <source>
        <dbReference type="UniProtKB" id="P07910"/>
    </source>
</evidence>
<evidence type="ECO:0000255" key="2"/>
<evidence type="ECO:0000255" key="3">
    <source>
        <dbReference type="PROSITE-ProRule" id="PRU00176"/>
    </source>
</evidence>
<evidence type="ECO:0000256" key="4">
    <source>
        <dbReference type="SAM" id="MobiDB-lite"/>
    </source>
</evidence>
<evidence type="ECO:0000305" key="5"/>
<evidence type="ECO:0000312" key="6">
    <source>
        <dbReference type="HGNC" id="HGNC:51333"/>
    </source>
</evidence>
<organism>
    <name type="scientific">Homo sapiens</name>
    <name type="common">Human</name>
    <dbReference type="NCBI Taxonomy" id="9606"/>
    <lineage>
        <taxon>Eukaryota</taxon>
        <taxon>Metazoa</taxon>
        <taxon>Chordata</taxon>
        <taxon>Craniata</taxon>
        <taxon>Vertebrata</taxon>
        <taxon>Euteleostomi</taxon>
        <taxon>Mammalia</taxon>
        <taxon>Eutheria</taxon>
        <taxon>Euarchontoglires</taxon>
        <taxon>Primates</taxon>
        <taxon>Haplorrhini</taxon>
        <taxon>Catarrhini</taxon>
        <taxon>Hominidae</taxon>
        <taxon>Homo</taxon>
    </lineage>
</organism>
<dbReference type="EMBL" id="AC245056">
    <property type="status" value="NOT_ANNOTATED_CDS"/>
    <property type="molecule type" value="Genomic_DNA"/>
</dbReference>
<dbReference type="CCDS" id="CCDS76107.1"/>
<dbReference type="RefSeq" id="NP_001139653.1">
    <property type="nucleotide sequence ID" value="NM_001146181.2"/>
</dbReference>
<dbReference type="RefSeq" id="NP_001289480.1">
    <property type="nucleotide sequence ID" value="NM_001302551.2"/>
</dbReference>
<dbReference type="SMR" id="P0DMR1"/>
<dbReference type="FunCoup" id="P0DMR1">
    <property type="interactions" value="572"/>
</dbReference>
<dbReference type="IntAct" id="P0DMR1">
    <property type="interactions" value="1"/>
</dbReference>
<dbReference type="iPTMnet" id="P0DMR1"/>
<dbReference type="PhosphoSitePlus" id="P0DMR1"/>
<dbReference type="BioMuta" id="HNRNPCL4"/>
<dbReference type="jPOST" id="P0DMR1"/>
<dbReference type="MassIVE" id="P0DMR1"/>
<dbReference type="PeptideAtlas" id="P0DMR1"/>
<dbReference type="Pumba" id="P0DMR1"/>
<dbReference type="DNASU" id="101060301"/>
<dbReference type="Ensembl" id="ENST00000323770.8">
    <property type="protein sequence ID" value="ENSP00000485450.2"/>
    <property type="gene ID" value="ENSG00000179412.11"/>
</dbReference>
<dbReference type="Ensembl" id="ENST00000633805.3">
    <property type="protein sequence ID" value="ENSP00000488276.1"/>
    <property type="gene ID" value="ENSG00000282095.3"/>
</dbReference>
<dbReference type="Ensembl" id="ENST00000637294.4">
    <property type="protein sequence ID" value="ENSP00000490926.1"/>
    <property type="gene ID" value="ENSG00000283231.4"/>
</dbReference>
<dbReference type="GeneID" id="101060301"/>
<dbReference type="KEGG" id="hsa:101060301"/>
<dbReference type="MANE-Select" id="ENST00000323770.8">
    <property type="protein sequence ID" value="ENSP00000485450.2"/>
    <property type="RefSeq nucleotide sequence ID" value="NM_001302551.2"/>
    <property type="RefSeq protein sequence ID" value="NP_001289480.1"/>
</dbReference>
<dbReference type="UCSC" id="uc031tpp.2">
    <property type="organism name" value="human"/>
</dbReference>
<dbReference type="AGR" id="HGNC:51235"/>
<dbReference type="AGR" id="HGNC:51333"/>
<dbReference type="CTD" id="101060301"/>
<dbReference type="GeneCards" id="HNRNPCL4"/>
<dbReference type="HGNC" id="HGNC:51333">
    <property type="gene designation" value="HNRNPCL4"/>
</dbReference>
<dbReference type="HPA" id="ENSG00000179412">
    <property type="expression patterns" value="Not detected"/>
</dbReference>
<dbReference type="neXtProt" id="NX_P0DMR1"/>
<dbReference type="OpenTargets" id="ENSG00000277058"/>
<dbReference type="VEuPathDB" id="HostDB:ENSG00000179412"/>
<dbReference type="GeneTree" id="ENSGT00940000153402"/>
<dbReference type="HOGENOM" id="CLU_079090_0_0_1"/>
<dbReference type="InParanoid" id="P0DMR1"/>
<dbReference type="OMA" id="TMDWSSS"/>
<dbReference type="OrthoDB" id="6730379at2759"/>
<dbReference type="PAN-GO" id="P0DMR1">
    <property type="GO annotations" value="2 GO annotations based on evolutionary models"/>
</dbReference>
<dbReference type="PathwayCommons" id="P0DMR1"/>
<dbReference type="BioGRID-ORCS" id="101060301">
    <property type="hits" value="3 hits in 108 CRISPR screens"/>
</dbReference>
<dbReference type="BioGRID-ORCS" id="649330">
    <property type="hits" value="7 hits in 186 CRISPR screens"/>
</dbReference>
<dbReference type="Pharos" id="P0DMR1">
    <property type="development level" value="Tdark"/>
</dbReference>
<dbReference type="PRO" id="PR:P0DMR1"/>
<dbReference type="Proteomes" id="UP000005640">
    <property type="component" value="Chromosome 1"/>
</dbReference>
<dbReference type="RNAct" id="P0DMR1">
    <property type="molecule type" value="protein"/>
</dbReference>
<dbReference type="Bgee" id="ENSG00000179412">
    <property type="expression patterns" value="Expressed in primordial germ cell in gonad and 2 other cell types or tissues"/>
</dbReference>
<dbReference type="GO" id="GO:0005634">
    <property type="term" value="C:nucleus"/>
    <property type="evidence" value="ECO:0000318"/>
    <property type="project" value="GO_Central"/>
</dbReference>
<dbReference type="GO" id="GO:0003723">
    <property type="term" value="F:RNA binding"/>
    <property type="evidence" value="ECO:0000318"/>
    <property type="project" value="GO_Central"/>
</dbReference>
<dbReference type="FunFam" id="3.30.70.330:FF:000019">
    <property type="entry name" value="heterogeneous nuclear ribonucleoproteins C1/C2 isoform X1"/>
    <property type="match status" value="1"/>
</dbReference>
<dbReference type="Gene3D" id="3.30.70.330">
    <property type="match status" value="1"/>
</dbReference>
<dbReference type="InterPro" id="IPR017347">
    <property type="entry name" value="hnRNP_C"/>
</dbReference>
<dbReference type="InterPro" id="IPR012677">
    <property type="entry name" value="Nucleotide-bd_a/b_plait_sf"/>
</dbReference>
<dbReference type="InterPro" id="IPR035979">
    <property type="entry name" value="RBD_domain_sf"/>
</dbReference>
<dbReference type="InterPro" id="IPR000504">
    <property type="entry name" value="RRM_dom"/>
</dbReference>
<dbReference type="InterPro" id="IPR051186">
    <property type="entry name" value="RRM_HNRPC/RALY_subfam"/>
</dbReference>
<dbReference type="PANTHER" id="PTHR13968">
    <property type="entry name" value="HETEROGENEOUS NUCLEAR RIBONUCLEOPROTEIN"/>
    <property type="match status" value="1"/>
</dbReference>
<dbReference type="PANTHER" id="PTHR13968:SF30">
    <property type="entry name" value="HETEROGENEOUS NUCLEAR RIBONUCLEOPROTEIN C-LIKE 3-RELATED"/>
    <property type="match status" value="1"/>
</dbReference>
<dbReference type="Pfam" id="PF00076">
    <property type="entry name" value="RRM_1"/>
    <property type="match status" value="1"/>
</dbReference>
<dbReference type="PIRSF" id="PIRSF037992">
    <property type="entry name" value="hnRNP-C_Raly"/>
    <property type="match status" value="1"/>
</dbReference>
<dbReference type="SMART" id="SM00360">
    <property type="entry name" value="RRM"/>
    <property type="match status" value="1"/>
</dbReference>
<dbReference type="SUPFAM" id="SSF54928">
    <property type="entry name" value="RNA-binding domain, RBD"/>
    <property type="match status" value="1"/>
</dbReference>
<dbReference type="PROSITE" id="PS50102">
    <property type="entry name" value="RRM"/>
    <property type="match status" value="1"/>
</dbReference>
<feature type="chain" id="PRO_0000431380" description="Heterogeneous nuclear ribonucleoprotein C-like 4">
    <location>
        <begin position="1"/>
        <end position="293"/>
    </location>
</feature>
<feature type="domain" description="RRM" evidence="3">
    <location>
        <begin position="16"/>
        <end position="87"/>
    </location>
</feature>
<feature type="region of interest" description="Disordered" evidence="4">
    <location>
        <begin position="140"/>
        <end position="177"/>
    </location>
</feature>
<feature type="region of interest" description="Disordered" evidence="4">
    <location>
        <begin position="208"/>
        <end position="293"/>
    </location>
</feature>
<feature type="coiled-coil region" evidence="2">
    <location>
        <begin position="177"/>
        <end position="208"/>
    </location>
</feature>
<feature type="compositionally biased region" description="Basic and acidic residues" evidence="4">
    <location>
        <begin position="208"/>
        <end position="222"/>
    </location>
</feature>
<feature type="compositionally biased region" description="Basic and acidic residues" evidence="4">
    <location>
        <begin position="229"/>
        <end position="240"/>
    </location>
</feature>
<feature type="compositionally biased region" description="Acidic residues" evidence="4">
    <location>
        <begin position="242"/>
        <end position="263"/>
    </location>
</feature>
<feature type="compositionally biased region" description="Basic and acidic residues" evidence="4">
    <location>
        <begin position="269"/>
        <end position="293"/>
    </location>
</feature>
<name>HNRC4_HUMAN</name>
<sequence length="293" mass="32029">MASNVTNKMDPHSMNSRVFIGNLNTLVVKKSDVEAIFSKYGKIAGCSVHKGFAFVQYDKEKNARAAVAGEDGRMIASQVVDINLAAEPKVNRGNAGVKRSAAEMYGSSFDLDYNLQRDYYGGMYSFPARVPPPPPIALAVVPSKRQRISGNTSRRGKSGFNSKSGKRGSSKSGKLKGDDLQAIKQELTQIKQKVDSLLENLEKIEKEHCKQGVEVKNAKSEEEQTSSSSKKDKTHVKMESEGGADDSVEEGDLLCDDDNEDQGDNQLELIKDDEKGAEEGEDDRDRANGQDDS</sequence>
<protein>
    <recommendedName>
        <fullName evidence="6">Heterogeneous nuclear ribonucleoprotein C-like 4</fullName>
    </recommendedName>
</protein>
<reference key="1">
    <citation type="journal article" date="2006" name="Nature">
        <title>The DNA sequence and biological annotation of human chromosome 1.</title>
        <authorList>
            <person name="Gregory S.G."/>
            <person name="Barlow K.F."/>
            <person name="McLay K.E."/>
            <person name="Kaul R."/>
            <person name="Swarbreck D."/>
            <person name="Dunham A."/>
            <person name="Scott C.E."/>
            <person name="Howe K.L."/>
            <person name="Woodfine K."/>
            <person name="Spencer C.C.A."/>
            <person name="Jones M.C."/>
            <person name="Gillson C."/>
            <person name="Searle S."/>
            <person name="Zhou Y."/>
            <person name="Kokocinski F."/>
            <person name="McDonald L."/>
            <person name="Evans R."/>
            <person name="Phillips K."/>
            <person name="Atkinson A."/>
            <person name="Cooper R."/>
            <person name="Jones C."/>
            <person name="Hall R.E."/>
            <person name="Andrews T.D."/>
            <person name="Lloyd C."/>
            <person name="Ainscough R."/>
            <person name="Almeida J.P."/>
            <person name="Ambrose K.D."/>
            <person name="Anderson F."/>
            <person name="Andrew R.W."/>
            <person name="Ashwell R.I.S."/>
            <person name="Aubin K."/>
            <person name="Babbage A.K."/>
            <person name="Bagguley C.L."/>
            <person name="Bailey J."/>
            <person name="Beasley H."/>
            <person name="Bethel G."/>
            <person name="Bird C.P."/>
            <person name="Bray-Allen S."/>
            <person name="Brown J.Y."/>
            <person name="Brown A.J."/>
            <person name="Buckley D."/>
            <person name="Burton J."/>
            <person name="Bye J."/>
            <person name="Carder C."/>
            <person name="Chapman J.C."/>
            <person name="Clark S.Y."/>
            <person name="Clarke G."/>
            <person name="Clee C."/>
            <person name="Cobley V."/>
            <person name="Collier R.E."/>
            <person name="Corby N."/>
            <person name="Coville G.J."/>
            <person name="Davies J."/>
            <person name="Deadman R."/>
            <person name="Dunn M."/>
            <person name="Earthrowl M."/>
            <person name="Ellington A.G."/>
            <person name="Errington H."/>
            <person name="Frankish A."/>
            <person name="Frankland J."/>
            <person name="French L."/>
            <person name="Garner P."/>
            <person name="Garnett J."/>
            <person name="Gay L."/>
            <person name="Ghori M.R.J."/>
            <person name="Gibson R."/>
            <person name="Gilby L.M."/>
            <person name="Gillett W."/>
            <person name="Glithero R.J."/>
            <person name="Grafham D.V."/>
            <person name="Griffiths C."/>
            <person name="Griffiths-Jones S."/>
            <person name="Grocock R."/>
            <person name="Hammond S."/>
            <person name="Harrison E.S.I."/>
            <person name="Hart E."/>
            <person name="Haugen E."/>
            <person name="Heath P.D."/>
            <person name="Holmes S."/>
            <person name="Holt K."/>
            <person name="Howden P.J."/>
            <person name="Hunt A.R."/>
            <person name="Hunt S.E."/>
            <person name="Hunter G."/>
            <person name="Isherwood J."/>
            <person name="James R."/>
            <person name="Johnson C."/>
            <person name="Johnson D."/>
            <person name="Joy A."/>
            <person name="Kay M."/>
            <person name="Kershaw J.K."/>
            <person name="Kibukawa M."/>
            <person name="Kimberley A.M."/>
            <person name="King A."/>
            <person name="Knights A.J."/>
            <person name="Lad H."/>
            <person name="Laird G."/>
            <person name="Lawlor S."/>
            <person name="Leongamornlert D.A."/>
            <person name="Lloyd D.M."/>
            <person name="Loveland J."/>
            <person name="Lovell J."/>
            <person name="Lush M.J."/>
            <person name="Lyne R."/>
            <person name="Martin S."/>
            <person name="Mashreghi-Mohammadi M."/>
            <person name="Matthews L."/>
            <person name="Matthews N.S.W."/>
            <person name="McLaren S."/>
            <person name="Milne S."/>
            <person name="Mistry S."/>
            <person name="Moore M.J.F."/>
            <person name="Nickerson T."/>
            <person name="O'Dell C.N."/>
            <person name="Oliver K."/>
            <person name="Palmeiri A."/>
            <person name="Palmer S.A."/>
            <person name="Parker A."/>
            <person name="Patel D."/>
            <person name="Pearce A.V."/>
            <person name="Peck A.I."/>
            <person name="Pelan S."/>
            <person name="Phelps K."/>
            <person name="Phillimore B.J."/>
            <person name="Plumb R."/>
            <person name="Rajan J."/>
            <person name="Raymond C."/>
            <person name="Rouse G."/>
            <person name="Saenphimmachak C."/>
            <person name="Sehra H.K."/>
            <person name="Sheridan E."/>
            <person name="Shownkeen R."/>
            <person name="Sims S."/>
            <person name="Skuce C.D."/>
            <person name="Smith M."/>
            <person name="Steward C."/>
            <person name="Subramanian S."/>
            <person name="Sycamore N."/>
            <person name="Tracey A."/>
            <person name="Tromans A."/>
            <person name="Van Helmond Z."/>
            <person name="Wall M."/>
            <person name="Wallis J.M."/>
            <person name="White S."/>
            <person name="Whitehead S.L."/>
            <person name="Wilkinson J.E."/>
            <person name="Willey D.L."/>
            <person name="Williams H."/>
            <person name="Wilming L."/>
            <person name="Wray P.W."/>
            <person name="Wu Z."/>
            <person name="Coulson A."/>
            <person name="Vaudin M."/>
            <person name="Sulston J.E."/>
            <person name="Durbin R.M."/>
            <person name="Hubbard T."/>
            <person name="Wooster R."/>
            <person name="Dunham I."/>
            <person name="Carter N.P."/>
            <person name="McVean G."/>
            <person name="Ross M.T."/>
            <person name="Harrow J."/>
            <person name="Olson M.V."/>
            <person name="Beck S."/>
            <person name="Rogers J."/>
            <person name="Bentley D.R."/>
        </authorList>
    </citation>
    <scope>NUCLEOTIDE SEQUENCE [LARGE SCALE GENOMIC DNA]</scope>
</reference>